<accession>Q8X071</accession>
<reference key="1">
    <citation type="journal article" date="2003" name="Nucleic Acids Res.">
        <title>What's in the genome of a filamentous fungus? Analysis of the Neurospora genome sequence.</title>
        <authorList>
            <person name="Mannhaupt G."/>
            <person name="Montrone C."/>
            <person name="Haase D."/>
            <person name="Mewes H.-W."/>
            <person name="Aign V."/>
            <person name="Hoheisel J.D."/>
            <person name="Fartmann B."/>
            <person name="Nyakatura G."/>
            <person name="Kempken F."/>
            <person name="Maier J."/>
            <person name="Schulte U."/>
        </authorList>
    </citation>
    <scope>NUCLEOTIDE SEQUENCE [LARGE SCALE GENOMIC DNA]</scope>
    <source>
        <strain>ATCC 24698 / 74-OR23-1A / CBS 708.71 / DSM 1257 / FGSC 987</strain>
    </source>
</reference>
<reference key="2">
    <citation type="journal article" date="2003" name="Nature">
        <title>The genome sequence of the filamentous fungus Neurospora crassa.</title>
        <authorList>
            <person name="Galagan J.E."/>
            <person name="Calvo S.E."/>
            <person name="Borkovich K.A."/>
            <person name="Selker E.U."/>
            <person name="Read N.D."/>
            <person name="Jaffe D.B."/>
            <person name="FitzHugh W."/>
            <person name="Ma L.-J."/>
            <person name="Smirnov S."/>
            <person name="Purcell S."/>
            <person name="Rehman B."/>
            <person name="Elkins T."/>
            <person name="Engels R."/>
            <person name="Wang S."/>
            <person name="Nielsen C.B."/>
            <person name="Butler J."/>
            <person name="Endrizzi M."/>
            <person name="Qui D."/>
            <person name="Ianakiev P."/>
            <person name="Bell-Pedersen D."/>
            <person name="Nelson M.A."/>
            <person name="Werner-Washburne M."/>
            <person name="Selitrennikoff C.P."/>
            <person name="Kinsey J.A."/>
            <person name="Braun E.L."/>
            <person name="Zelter A."/>
            <person name="Schulte U."/>
            <person name="Kothe G.O."/>
            <person name="Jedd G."/>
            <person name="Mewes H.-W."/>
            <person name="Staben C."/>
            <person name="Marcotte E."/>
            <person name="Greenberg D."/>
            <person name="Roy A."/>
            <person name="Foley K."/>
            <person name="Naylor J."/>
            <person name="Stange-Thomann N."/>
            <person name="Barrett R."/>
            <person name="Gnerre S."/>
            <person name="Kamal M."/>
            <person name="Kamvysselis M."/>
            <person name="Mauceli E.W."/>
            <person name="Bielke C."/>
            <person name="Rudd S."/>
            <person name="Frishman D."/>
            <person name="Krystofova S."/>
            <person name="Rasmussen C."/>
            <person name="Metzenberg R.L."/>
            <person name="Perkins D.D."/>
            <person name="Kroken S."/>
            <person name="Cogoni C."/>
            <person name="Macino G."/>
            <person name="Catcheside D.E.A."/>
            <person name="Li W."/>
            <person name="Pratt R.J."/>
            <person name="Osmani S.A."/>
            <person name="DeSouza C.P.C."/>
            <person name="Glass N.L."/>
            <person name="Orbach M.J."/>
            <person name="Berglund J.A."/>
            <person name="Voelker R."/>
            <person name="Yarden O."/>
            <person name="Plamann M."/>
            <person name="Seiler S."/>
            <person name="Dunlap J.C."/>
            <person name="Radford A."/>
            <person name="Aramayo R."/>
            <person name="Natvig D.O."/>
            <person name="Alex L.A."/>
            <person name="Mannhaupt G."/>
            <person name="Ebbole D.J."/>
            <person name="Freitag M."/>
            <person name="Paulsen I."/>
            <person name="Sachs M.S."/>
            <person name="Lander E.S."/>
            <person name="Nusbaum C."/>
            <person name="Birren B.W."/>
        </authorList>
    </citation>
    <scope>NUCLEOTIDE SEQUENCE [LARGE SCALE GENOMIC DNA]</scope>
    <source>
        <strain>ATCC 24698 / 74-OR23-1A / CBS 708.71 / DSM 1257 / FGSC 987</strain>
    </source>
</reference>
<dbReference type="EC" id="4.2.3.4" evidence="1"/>
<dbReference type="EC" id="2.5.1.19" evidence="1"/>
<dbReference type="EC" id="2.7.1.71" evidence="1"/>
<dbReference type="EC" id="4.2.1.10" evidence="1"/>
<dbReference type="EC" id="1.1.1.25" evidence="1"/>
<dbReference type="EMBL" id="AL670001">
    <property type="protein sequence ID" value="CAD21207.1"/>
    <property type="molecule type" value="Genomic_DNA"/>
</dbReference>
<dbReference type="EMBL" id="CM002237">
    <property type="protein sequence ID" value="EAA26764.1"/>
    <property type="molecule type" value="Genomic_DNA"/>
</dbReference>
<dbReference type="PIR" id="S14749">
    <property type="entry name" value="S14749"/>
</dbReference>
<dbReference type="RefSeq" id="XP_956000.1">
    <property type="nucleotide sequence ID" value="XM_950907.3"/>
</dbReference>
<dbReference type="SMR" id="Q8X071"/>
<dbReference type="FunCoup" id="Q8X071">
    <property type="interactions" value="452"/>
</dbReference>
<dbReference type="STRING" id="367110.Q8X071"/>
<dbReference type="PaxDb" id="5141-EFNCRP00000001779"/>
<dbReference type="EnsemblFungi" id="EAA26764">
    <property type="protein sequence ID" value="EAA26764"/>
    <property type="gene ID" value="NCU01632"/>
</dbReference>
<dbReference type="GeneID" id="3872147"/>
<dbReference type="KEGG" id="ncr:NCU01632"/>
<dbReference type="VEuPathDB" id="FungiDB:NCU01632"/>
<dbReference type="HOGENOM" id="CLU_001201_1_2_1"/>
<dbReference type="InParanoid" id="Q8X071"/>
<dbReference type="OrthoDB" id="197068at2759"/>
<dbReference type="SABIO-RK" id="Q8X071"/>
<dbReference type="UniPathway" id="UPA00053">
    <property type="reaction ID" value="UER00085"/>
</dbReference>
<dbReference type="UniPathway" id="UPA00053">
    <property type="reaction ID" value="UER00086"/>
</dbReference>
<dbReference type="UniPathway" id="UPA00053">
    <property type="reaction ID" value="UER00087"/>
</dbReference>
<dbReference type="UniPathway" id="UPA00053">
    <property type="reaction ID" value="UER00088"/>
</dbReference>
<dbReference type="UniPathway" id="UPA00053">
    <property type="reaction ID" value="UER00089"/>
</dbReference>
<dbReference type="Proteomes" id="UP000001805">
    <property type="component" value="Chromosome 6, Linkage Group II"/>
</dbReference>
<dbReference type="GO" id="GO:0005737">
    <property type="term" value="C:cytoplasm"/>
    <property type="evidence" value="ECO:0007669"/>
    <property type="project" value="UniProtKB-SubCell"/>
</dbReference>
<dbReference type="GO" id="GO:0003855">
    <property type="term" value="F:3-dehydroquinate dehydratase activity"/>
    <property type="evidence" value="ECO:0007669"/>
    <property type="project" value="UniProtKB-UniRule"/>
</dbReference>
<dbReference type="GO" id="GO:0003856">
    <property type="term" value="F:3-dehydroquinate synthase activity"/>
    <property type="evidence" value="ECO:0007669"/>
    <property type="project" value="UniProtKB-UniRule"/>
</dbReference>
<dbReference type="GO" id="GO:0003866">
    <property type="term" value="F:3-phosphoshikimate 1-carboxyvinyltransferase activity"/>
    <property type="evidence" value="ECO:0000318"/>
    <property type="project" value="GO_Central"/>
</dbReference>
<dbReference type="GO" id="GO:0005524">
    <property type="term" value="F:ATP binding"/>
    <property type="evidence" value="ECO:0007669"/>
    <property type="project" value="UniProtKB-UniRule"/>
</dbReference>
<dbReference type="GO" id="GO:0046872">
    <property type="term" value="F:metal ion binding"/>
    <property type="evidence" value="ECO:0007669"/>
    <property type="project" value="UniProtKB-UniRule"/>
</dbReference>
<dbReference type="GO" id="GO:0004764">
    <property type="term" value="F:shikimate 3-dehydrogenase (NADP+) activity"/>
    <property type="evidence" value="ECO:0007669"/>
    <property type="project" value="UniProtKB-UniRule"/>
</dbReference>
<dbReference type="GO" id="GO:0004765">
    <property type="term" value="F:shikimate kinase activity"/>
    <property type="evidence" value="ECO:0007669"/>
    <property type="project" value="UniProtKB-UniRule"/>
</dbReference>
<dbReference type="GO" id="GO:0008652">
    <property type="term" value="P:amino acid biosynthetic process"/>
    <property type="evidence" value="ECO:0007669"/>
    <property type="project" value="UniProtKB-KW"/>
</dbReference>
<dbReference type="GO" id="GO:0009073">
    <property type="term" value="P:aromatic amino acid family biosynthetic process"/>
    <property type="evidence" value="ECO:0007669"/>
    <property type="project" value="UniProtKB-UniRule"/>
</dbReference>
<dbReference type="GO" id="GO:0009423">
    <property type="term" value="P:chorismate biosynthetic process"/>
    <property type="evidence" value="ECO:0000318"/>
    <property type="project" value="GO_Central"/>
</dbReference>
<dbReference type="CDD" id="cd00502">
    <property type="entry name" value="DHQase_I"/>
    <property type="match status" value="1"/>
</dbReference>
<dbReference type="CDD" id="cd08195">
    <property type="entry name" value="DHQS"/>
    <property type="match status" value="1"/>
</dbReference>
<dbReference type="CDD" id="cd01556">
    <property type="entry name" value="EPSP_synthase"/>
    <property type="match status" value="1"/>
</dbReference>
<dbReference type="CDD" id="cd01065">
    <property type="entry name" value="NAD_bind_Shikimate_DH"/>
    <property type="match status" value="1"/>
</dbReference>
<dbReference type="CDD" id="cd00464">
    <property type="entry name" value="SK"/>
    <property type="match status" value="1"/>
</dbReference>
<dbReference type="FunFam" id="1.20.1090.10:FF:000007">
    <property type="entry name" value="Pentafunctional AROM polypeptide"/>
    <property type="match status" value="1"/>
</dbReference>
<dbReference type="FunFam" id="3.20.20.70:FF:000135">
    <property type="entry name" value="Pentafunctional AROM polypeptide"/>
    <property type="match status" value="1"/>
</dbReference>
<dbReference type="FunFam" id="3.40.50.10860:FF:000015">
    <property type="entry name" value="Pentafunctional AROM polypeptide"/>
    <property type="match status" value="1"/>
</dbReference>
<dbReference type="FunFam" id="3.40.50.1970:FF:000007">
    <property type="entry name" value="Pentafunctional AROM polypeptide"/>
    <property type="match status" value="1"/>
</dbReference>
<dbReference type="FunFam" id="3.40.50.300:FF:001256">
    <property type="entry name" value="Pentafunctional AROM polypeptide"/>
    <property type="match status" value="1"/>
</dbReference>
<dbReference type="FunFam" id="3.65.10.10:FF:000007">
    <property type="entry name" value="Pentafunctional AROM polypeptide"/>
    <property type="match status" value="1"/>
</dbReference>
<dbReference type="FunFam" id="3.65.10.10:FF:000008">
    <property type="entry name" value="Pentafunctional AROM polypeptide"/>
    <property type="match status" value="1"/>
</dbReference>
<dbReference type="Gene3D" id="3.40.50.1970">
    <property type="match status" value="1"/>
</dbReference>
<dbReference type="Gene3D" id="3.20.20.70">
    <property type="entry name" value="Aldolase class I"/>
    <property type="match status" value="1"/>
</dbReference>
<dbReference type="Gene3D" id="1.20.1090.10">
    <property type="entry name" value="Dehydroquinate synthase-like - alpha domain"/>
    <property type="match status" value="1"/>
</dbReference>
<dbReference type="Gene3D" id="3.65.10.10">
    <property type="entry name" value="Enolpyruvate transferase domain"/>
    <property type="match status" value="2"/>
</dbReference>
<dbReference type="Gene3D" id="3.40.50.10860">
    <property type="entry name" value="Leucine Dehydrogenase, chain A, domain 1"/>
    <property type="match status" value="1"/>
</dbReference>
<dbReference type="Gene3D" id="3.40.50.720">
    <property type="entry name" value="NAD(P)-binding Rossmann-like Domain"/>
    <property type="match status" value="1"/>
</dbReference>
<dbReference type="Gene3D" id="3.40.50.300">
    <property type="entry name" value="P-loop containing nucleotide triphosphate hydrolases"/>
    <property type="match status" value="1"/>
</dbReference>
<dbReference type="HAMAP" id="MF_00210">
    <property type="entry name" value="EPSP_synth"/>
    <property type="match status" value="1"/>
</dbReference>
<dbReference type="HAMAP" id="MF_03143">
    <property type="entry name" value="Pentafunct_AroM"/>
    <property type="match status" value="1"/>
</dbReference>
<dbReference type="HAMAP" id="MF_00109">
    <property type="entry name" value="Shikimate_kinase"/>
    <property type="match status" value="1"/>
</dbReference>
<dbReference type="InterPro" id="IPR018508">
    <property type="entry name" value="3-dehydroquinate_DH_AS"/>
</dbReference>
<dbReference type="InterPro" id="IPR013785">
    <property type="entry name" value="Aldolase_TIM"/>
</dbReference>
<dbReference type="InterPro" id="IPR046346">
    <property type="entry name" value="Aminoacid_DH-like_N_sf"/>
</dbReference>
<dbReference type="InterPro" id="IPR016037">
    <property type="entry name" value="DHQ_synth_AroB"/>
</dbReference>
<dbReference type="InterPro" id="IPR030960">
    <property type="entry name" value="DHQS/DOIS_N"/>
</dbReference>
<dbReference type="InterPro" id="IPR056179">
    <property type="entry name" value="DHQS_C"/>
</dbReference>
<dbReference type="InterPro" id="IPR001381">
    <property type="entry name" value="DHquinase_I"/>
</dbReference>
<dbReference type="InterPro" id="IPR001986">
    <property type="entry name" value="Enolpyruvate_Tfrase_dom"/>
</dbReference>
<dbReference type="InterPro" id="IPR036968">
    <property type="entry name" value="Enolpyruvate_Tfrase_sf"/>
</dbReference>
<dbReference type="InterPro" id="IPR006264">
    <property type="entry name" value="EPSP_synthase"/>
</dbReference>
<dbReference type="InterPro" id="IPR023193">
    <property type="entry name" value="EPSP_synthase_CS"/>
</dbReference>
<dbReference type="InterPro" id="IPR036291">
    <property type="entry name" value="NAD(P)-bd_dom_sf"/>
</dbReference>
<dbReference type="InterPro" id="IPR027417">
    <property type="entry name" value="P-loop_NTPase"/>
</dbReference>
<dbReference type="InterPro" id="IPR008289">
    <property type="entry name" value="Pentafunct_AroM"/>
</dbReference>
<dbReference type="InterPro" id="IPR013792">
    <property type="entry name" value="RNA3'P_cycl/enolpyr_Trfase_a/b"/>
</dbReference>
<dbReference type="InterPro" id="IPR031322">
    <property type="entry name" value="Shikimate/glucono_kinase"/>
</dbReference>
<dbReference type="InterPro" id="IPR013708">
    <property type="entry name" value="Shikimate_DH-bd_N"/>
</dbReference>
<dbReference type="InterPro" id="IPR010110">
    <property type="entry name" value="Shikimate_DH_AroM-type"/>
</dbReference>
<dbReference type="InterPro" id="IPR000623">
    <property type="entry name" value="Shikimate_kinase/TSH1"/>
</dbReference>
<dbReference type="InterPro" id="IPR023000">
    <property type="entry name" value="Shikimate_kinase_CS"/>
</dbReference>
<dbReference type="InterPro" id="IPR006151">
    <property type="entry name" value="Shikm_DH/Glu-tRNA_Rdtase"/>
</dbReference>
<dbReference type="NCBIfam" id="TIGR01356">
    <property type="entry name" value="aroA"/>
    <property type="match status" value="1"/>
</dbReference>
<dbReference type="NCBIfam" id="TIGR01357">
    <property type="entry name" value="aroB"/>
    <property type="match status" value="1"/>
</dbReference>
<dbReference type="NCBIfam" id="TIGR01093">
    <property type="entry name" value="aroD"/>
    <property type="match status" value="1"/>
</dbReference>
<dbReference type="NCBIfam" id="TIGR01809">
    <property type="entry name" value="Shik-DH-AROM"/>
    <property type="match status" value="1"/>
</dbReference>
<dbReference type="PANTHER" id="PTHR21090">
    <property type="entry name" value="AROM/DEHYDROQUINATE SYNTHASE"/>
    <property type="match status" value="1"/>
</dbReference>
<dbReference type="PANTHER" id="PTHR21090:SF5">
    <property type="entry name" value="PENTAFUNCTIONAL AROM POLYPEPTIDE"/>
    <property type="match status" value="1"/>
</dbReference>
<dbReference type="Pfam" id="PF01761">
    <property type="entry name" value="DHQ_synthase"/>
    <property type="match status" value="1"/>
</dbReference>
<dbReference type="Pfam" id="PF24621">
    <property type="entry name" value="DHQS_C"/>
    <property type="match status" value="1"/>
</dbReference>
<dbReference type="Pfam" id="PF01487">
    <property type="entry name" value="DHquinase_I"/>
    <property type="match status" value="1"/>
</dbReference>
<dbReference type="Pfam" id="PF00275">
    <property type="entry name" value="EPSP_synthase"/>
    <property type="match status" value="1"/>
</dbReference>
<dbReference type="Pfam" id="PF01488">
    <property type="entry name" value="Shikimate_DH"/>
    <property type="match status" value="1"/>
</dbReference>
<dbReference type="Pfam" id="PF08501">
    <property type="entry name" value="Shikimate_dh_N"/>
    <property type="match status" value="1"/>
</dbReference>
<dbReference type="Pfam" id="PF01202">
    <property type="entry name" value="SKI"/>
    <property type="match status" value="1"/>
</dbReference>
<dbReference type="PIRSF" id="PIRSF000514">
    <property type="entry name" value="Pentafunct_AroM"/>
    <property type="match status" value="1"/>
</dbReference>
<dbReference type="PRINTS" id="PR01100">
    <property type="entry name" value="SHIKIMTKNASE"/>
</dbReference>
<dbReference type="SUPFAM" id="SSF51569">
    <property type="entry name" value="Aldolase"/>
    <property type="match status" value="1"/>
</dbReference>
<dbReference type="SUPFAM" id="SSF53223">
    <property type="entry name" value="Aminoacid dehydrogenase-like, N-terminal domain"/>
    <property type="match status" value="1"/>
</dbReference>
<dbReference type="SUPFAM" id="SSF56796">
    <property type="entry name" value="Dehydroquinate synthase-like"/>
    <property type="match status" value="1"/>
</dbReference>
<dbReference type="SUPFAM" id="SSF55205">
    <property type="entry name" value="EPT/RTPC-like"/>
    <property type="match status" value="1"/>
</dbReference>
<dbReference type="SUPFAM" id="SSF51735">
    <property type="entry name" value="NAD(P)-binding Rossmann-fold domains"/>
    <property type="match status" value="1"/>
</dbReference>
<dbReference type="SUPFAM" id="SSF52540">
    <property type="entry name" value="P-loop containing nucleoside triphosphate hydrolases"/>
    <property type="match status" value="1"/>
</dbReference>
<dbReference type="PROSITE" id="PS01028">
    <property type="entry name" value="DEHYDROQUINASE_I"/>
    <property type="match status" value="1"/>
</dbReference>
<dbReference type="PROSITE" id="PS00104">
    <property type="entry name" value="EPSP_SYNTHASE_1"/>
    <property type="match status" value="1"/>
</dbReference>
<dbReference type="PROSITE" id="PS00885">
    <property type="entry name" value="EPSP_SYNTHASE_2"/>
    <property type="match status" value="1"/>
</dbReference>
<dbReference type="PROSITE" id="PS01128">
    <property type="entry name" value="SHIKIMATE_KINASE"/>
    <property type="match status" value="1"/>
</dbReference>
<name>ARO1_NEUCR</name>
<organism>
    <name type="scientific">Neurospora crassa (strain ATCC 24698 / 74-OR23-1A / CBS 708.71 / DSM 1257 / FGSC 987)</name>
    <dbReference type="NCBI Taxonomy" id="367110"/>
    <lineage>
        <taxon>Eukaryota</taxon>
        <taxon>Fungi</taxon>
        <taxon>Dikarya</taxon>
        <taxon>Ascomycota</taxon>
        <taxon>Pezizomycotina</taxon>
        <taxon>Sordariomycetes</taxon>
        <taxon>Sordariomycetidae</taxon>
        <taxon>Sordariales</taxon>
        <taxon>Sordariaceae</taxon>
        <taxon>Neurospora</taxon>
    </lineage>
</organism>
<protein>
    <recommendedName>
        <fullName evidence="1">Pentafunctional AROM polypeptide</fullName>
    </recommendedName>
    <domain>
        <recommendedName>
            <fullName evidence="1">3-dehydroquinate synthase</fullName>
            <shortName evidence="1">DHQS</shortName>
            <ecNumber evidence="1">4.2.3.4</ecNumber>
        </recommendedName>
    </domain>
    <domain>
        <recommendedName>
            <fullName evidence="1">3-phosphoshikimate 1-carboxyvinyltransferase</fullName>
            <ecNumber evidence="1">2.5.1.19</ecNumber>
        </recommendedName>
        <alternativeName>
            <fullName evidence="1">5-enolpyruvylshikimate-3-phosphate synthase</fullName>
            <shortName evidence="1">EPSP synthase</shortName>
            <shortName evidence="1">EPSPS</shortName>
        </alternativeName>
    </domain>
    <domain>
        <recommendedName>
            <fullName evidence="1">Shikimate kinase</fullName>
            <shortName evidence="1">SK</shortName>
            <ecNumber evidence="1">2.7.1.71</ecNumber>
        </recommendedName>
    </domain>
    <domain>
        <recommendedName>
            <fullName evidence="1">3-dehydroquinate dehydratase</fullName>
            <shortName evidence="1">3-dehydroquinase</shortName>
            <ecNumber evidence="1">4.2.1.10</ecNumber>
        </recommendedName>
    </domain>
    <domain>
        <recommendedName>
            <fullName evidence="1">Shikimate dehydrogenase</fullName>
            <ecNumber evidence="1">1.1.1.25</ecNumber>
        </recommendedName>
    </domain>
</protein>
<feature type="chain" id="PRO_0000406727" description="Pentafunctional AROM polypeptide">
    <location>
        <begin position="1"/>
        <end position="1563"/>
    </location>
</feature>
<feature type="region of interest" description="3-dehydroquinate synthase">
    <location>
        <begin position="1"/>
        <end position="382"/>
    </location>
</feature>
<feature type="region of interest" description="EPSP synthase">
    <location>
        <begin position="395"/>
        <end position="834"/>
    </location>
</feature>
<feature type="region of interest" description="Shikimate kinase">
    <location>
        <begin position="857"/>
        <end position="1051"/>
    </location>
</feature>
<feature type="region of interest" description="3-dehydroquinase">
    <location>
        <begin position="1052"/>
        <end position="1265"/>
    </location>
</feature>
<feature type="region of interest" description="Shikimate dehydrogenase">
    <location>
        <begin position="1278"/>
        <end position="1563"/>
    </location>
</feature>
<feature type="active site" description="Proton acceptor; for 3-dehydroquinate synthase activity" evidence="1">
    <location>
        <position position="258"/>
    </location>
</feature>
<feature type="active site" description="Proton acceptor; for 3-dehydroquinate synthase activity" evidence="1">
    <location>
        <position position="273"/>
    </location>
</feature>
<feature type="active site" description="For EPSP synthase activity" evidence="1">
    <location>
        <position position="816"/>
    </location>
</feature>
<feature type="active site" description="Proton acceptor; for 3-dehydroquinate dehydratase activity" evidence="1">
    <location>
        <position position="1168"/>
    </location>
</feature>
<feature type="active site" description="Schiff-base intermediate with substrate; for 3-dehydroquinate dehydratase activity" evidence="1">
    <location>
        <position position="1196"/>
    </location>
</feature>
<feature type="binding site" evidence="1">
    <location>
        <begin position="48"/>
        <end position="50"/>
    </location>
    <ligand>
        <name>NAD(+)</name>
        <dbReference type="ChEBI" id="CHEBI:57540"/>
    </ligand>
</feature>
<feature type="binding site" evidence="1">
    <location>
        <begin position="82"/>
        <end position="85"/>
    </location>
    <ligand>
        <name>NAD(+)</name>
        <dbReference type="ChEBI" id="CHEBI:57540"/>
    </ligand>
</feature>
<feature type="binding site" evidence="1">
    <location>
        <begin position="113"/>
        <end position="115"/>
    </location>
    <ligand>
        <name>NAD(+)</name>
        <dbReference type="ChEBI" id="CHEBI:57540"/>
    </ligand>
</feature>
<feature type="binding site" evidence="1">
    <location>
        <position position="118"/>
    </location>
    <ligand>
        <name>NAD(+)</name>
        <dbReference type="ChEBI" id="CHEBI:57540"/>
    </ligand>
</feature>
<feature type="binding site" evidence="1">
    <location>
        <position position="129"/>
    </location>
    <ligand>
        <name>7-phospho-2-dehydro-3-deoxy-D-arabino-heptonate</name>
        <dbReference type="ChEBI" id="CHEBI:58394"/>
    </ligand>
</feature>
<feature type="binding site" evidence="1">
    <location>
        <begin position="138"/>
        <end position="139"/>
    </location>
    <ligand>
        <name>NAD(+)</name>
        <dbReference type="ChEBI" id="CHEBI:57540"/>
    </ligand>
</feature>
<feature type="binding site" evidence="1">
    <location>
        <position position="145"/>
    </location>
    <ligand>
        <name>7-phospho-2-dehydro-3-deoxy-D-arabino-heptonate</name>
        <dbReference type="ChEBI" id="CHEBI:58394"/>
    </ligand>
</feature>
<feature type="binding site" evidence="1">
    <location>
        <position position="151"/>
    </location>
    <ligand>
        <name>7-phospho-2-dehydro-3-deoxy-D-arabino-heptonate</name>
        <dbReference type="ChEBI" id="CHEBI:58394"/>
    </ligand>
</feature>
<feature type="binding site" evidence="1">
    <location>
        <position position="160"/>
    </location>
    <ligand>
        <name>NAD(+)</name>
        <dbReference type="ChEBI" id="CHEBI:57540"/>
    </ligand>
</feature>
<feature type="binding site" evidence="1">
    <location>
        <position position="161"/>
    </location>
    <ligand>
        <name>7-phospho-2-dehydro-3-deoxy-D-arabino-heptonate</name>
        <dbReference type="ChEBI" id="CHEBI:58394"/>
    </ligand>
</feature>
<feature type="binding site" evidence="1">
    <location>
        <begin position="178"/>
        <end position="181"/>
    </location>
    <ligand>
        <name>NAD(+)</name>
        <dbReference type="ChEBI" id="CHEBI:57540"/>
    </ligand>
</feature>
<feature type="binding site" evidence="1">
    <location>
        <position position="189"/>
    </location>
    <ligand>
        <name>NAD(+)</name>
        <dbReference type="ChEBI" id="CHEBI:57540"/>
    </ligand>
</feature>
<feature type="binding site" evidence="1">
    <location>
        <begin position="193"/>
        <end position="196"/>
    </location>
    <ligand>
        <name>7-phospho-2-dehydro-3-deoxy-D-arabino-heptonate</name>
        <dbReference type="ChEBI" id="CHEBI:58394"/>
    </ligand>
</feature>
<feature type="binding site" evidence="1">
    <location>
        <position position="193"/>
    </location>
    <ligand>
        <name>Zn(2+)</name>
        <dbReference type="ChEBI" id="CHEBI:29105"/>
        <note>catalytic</note>
    </ligand>
</feature>
<feature type="binding site" evidence="1">
    <location>
        <position position="248"/>
    </location>
    <ligand>
        <name>7-phospho-2-dehydro-3-deoxy-D-arabino-heptonate</name>
        <dbReference type="ChEBI" id="CHEBI:58394"/>
    </ligand>
</feature>
<feature type="binding site" evidence="1">
    <location>
        <begin position="262"/>
        <end position="266"/>
    </location>
    <ligand>
        <name>7-phospho-2-dehydro-3-deoxy-D-arabino-heptonate</name>
        <dbReference type="ChEBI" id="CHEBI:58394"/>
    </ligand>
</feature>
<feature type="binding site" evidence="1">
    <location>
        <position position="269"/>
    </location>
    <ligand>
        <name>7-phospho-2-dehydro-3-deoxy-D-arabino-heptonate</name>
        <dbReference type="ChEBI" id="CHEBI:58394"/>
    </ligand>
</feature>
<feature type="binding site" evidence="1">
    <location>
        <position position="269"/>
    </location>
    <ligand>
        <name>Zn(2+)</name>
        <dbReference type="ChEBI" id="CHEBI:29105"/>
        <note>catalytic</note>
    </ligand>
</feature>
<feature type="binding site" evidence="1">
    <location>
        <position position="285"/>
    </location>
    <ligand>
        <name>7-phospho-2-dehydro-3-deoxy-D-arabino-heptonate</name>
        <dbReference type="ChEBI" id="CHEBI:58394"/>
    </ligand>
</feature>
<feature type="binding site" evidence="1">
    <location>
        <position position="285"/>
    </location>
    <ligand>
        <name>Zn(2+)</name>
        <dbReference type="ChEBI" id="CHEBI:29105"/>
        <note>catalytic</note>
    </ligand>
</feature>
<feature type="binding site" evidence="1">
    <location>
        <position position="354"/>
    </location>
    <ligand>
        <name>7-phospho-2-dehydro-3-deoxy-D-arabino-heptonate</name>
        <dbReference type="ChEBI" id="CHEBI:58394"/>
    </ligand>
</feature>
<feature type="binding site" evidence="1">
    <location>
        <begin position="864"/>
        <end position="871"/>
    </location>
    <ligand>
        <name>ATP</name>
        <dbReference type="ChEBI" id="CHEBI:30616"/>
    </ligand>
</feature>
<evidence type="ECO:0000255" key="1">
    <source>
        <dbReference type="HAMAP-Rule" id="MF_03143"/>
    </source>
</evidence>
<keyword id="KW-0028">Amino-acid biosynthesis</keyword>
<keyword id="KW-0057">Aromatic amino acid biosynthesis</keyword>
<keyword id="KW-0067">ATP-binding</keyword>
<keyword id="KW-0963">Cytoplasm</keyword>
<keyword id="KW-0418">Kinase</keyword>
<keyword id="KW-0456">Lyase</keyword>
<keyword id="KW-0479">Metal-binding</keyword>
<keyword id="KW-0511">Multifunctional enzyme</keyword>
<keyword id="KW-0521">NADP</keyword>
<keyword id="KW-0547">Nucleotide-binding</keyword>
<keyword id="KW-0560">Oxidoreductase</keyword>
<keyword id="KW-1185">Reference proteome</keyword>
<keyword id="KW-0808">Transferase</keyword>
<keyword id="KW-0862">Zinc</keyword>
<gene>
    <name evidence="1" type="primary">aro-1</name>
    <name type="synonym">aro-2</name>
    <name type="synonym">aro-4</name>
    <name type="synonym">aro-5</name>
    <name type="synonym">aro-9</name>
    <name type="ORF">B14H13.20</name>
    <name type="ORF">NCU016321</name>
</gene>
<sequence>MAEPISNPTRINILGKDNIIIDHGIWLNFVAQDLLQNIKSSTYILITDTNLYKTYVPPFQSVFEKAAPQDVRLLTYAIPPGEYSKGRDTKAEIEDWMLSHQCTRDTVIIALGGGVIGDMIGYVAATFMRGVRFVQCPTTLLAMVDSSIGGKTAIDVPMGKNLIGAFWQPERIYIDLTFLNTLPVREFINGMAEVIKTAAIWDENEFTALEENAKAILEAVRSKNKSADRLAPIRDILKRIVLGSARVKAEVVSSDEREGGLRNLLNFGHSIGHAYEAILTPQVLHGEAVAIGMVKEAELARFLGVLRPSAVARLSKCIASYDLPTSLQDKRIVKLTAGKECPVDVLLQKMAVDKKNEGRKKKIVLLSAIGKTYEPKASVVEDRAIRIVLSPCIRVFAGVPKDLNVSVTPPGSKSISNRALILAALGEGTTRIHNLLHSDDTQVMLNAVAQLQGASFSWEEGDVLVVKGNGGKLQATSTPLYLGNAGTASRFLTSVAALCNPSDVNSTVLTGNARMKQRPIGALVDALRANGVGVKYLEKEHSLPVQVDAAGGLAGGVMELAATISSQYVSSLLMAAPYAREPVTLRLVGGKPISQPYIDMTIAMMASFGVQVQRSAEDPNTYYIPQGTYKNPETYVVESDASSATYPLAIAAITGTTCTVPNIGSKSLQGDARFAIEVLRPMGCTVEQTDVSTTVTGPPIGTLKAIPHVDMEPMTDAFLTASVLAAVASGTTQITGIANQRVKECNRILAMKDQLAKFGVHCNELEDGIEVIGIPYTELKNPTEGIYCYDDHRVAMSFSVLSTISPHPVLILERECTGKTWPGWWDTMSNYFKVHLEGEEEPHSSHVSHEKPRKGNPKSIFIIGMRGAGKSTAGKWMSEVLNRPLIDLDHELERREGQTIPEIIRSERGWEGFRKAELELLEDVIKNNPTGHIFSCGGGIVETEAARKMLLSYSQNGGIVLLVHRDTDQVVEYLMRDKSRPAYSENIREVYYRRKPFFEECSNFRYYSPHPDGSKALTEPPFDFSQFLSVICGHSNHLEEVKKKPHSFFVSLTVPNVSKALDIIPKVVVGSDAVELRVDLLEDYDPEFVAKQVALLRSAARIPIVYTVRTVSQGGKFPDDDYELALKLYRTGLQAGVEYLDLEMTMPDEVIEAVTNEKGYTHIIASHHDPKATLSWKNGGWIQYYNKALQHGDVVKLVGVARELADNFALARFKASLAAAHDKPLIALNMGAAGKLSRVLNGFLTPVSHPALPSKAAPGQLSAAEIRQALALIGELEPRSFHLFGNPISASRSPALHNALFRDNGLPHQYSLFETDNAADVKDLIRAPGFGGASVTIPLKLDIMPLLDEVSDAAKVIGAVNTIIPVRNGDKVTLRGDNTDWMGMVYALRNAGVVKCTKESPTAGMVVGAGGTTRAAVHALHDLGFAPIYVVARNADRVKALAESFPAEYDIRSLSTPEEVAAESTAQPSVVISTIPADKPIDQSMREVIVASLRHPSVADGKHVLLEMAYTPRHTPLMQLAEDAHWQTIPGLEVLAAQGWYQFQLWTGITPIYTDAQAAVMGN</sequence>
<proteinExistence type="inferred from homology"/>
<comment type="function">
    <text evidence="1">The AROM polypeptide catalyzes 5 consecutive enzymatic reactions in prechorismate polyaromatic amino acid biosynthesis.</text>
</comment>
<comment type="catalytic activity">
    <reaction evidence="1">
        <text>7-phospho-2-dehydro-3-deoxy-D-arabino-heptonate = 3-dehydroquinate + phosphate</text>
        <dbReference type="Rhea" id="RHEA:21968"/>
        <dbReference type="ChEBI" id="CHEBI:32364"/>
        <dbReference type="ChEBI" id="CHEBI:43474"/>
        <dbReference type="ChEBI" id="CHEBI:58394"/>
        <dbReference type="EC" id="4.2.3.4"/>
    </reaction>
</comment>
<comment type="catalytic activity">
    <reaction evidence="1">
        <text>3-dehydroquinate = 3-dehydroshikimate + H2O</text>
        <dbReference type="Rhea" id="RHEA:21096"/>
        <dbReference type="ChEBI" id="CHEBI:15377"/>
        <dbReference type="ChEBI" id="CHEBI:16630"/>
        <dbReference type="ChEBI" id="CHEBI:32364"/>
        <dbReference type="EC" id="4.2.1.10"/>
    </reaction>
</comment>
<comment type="catalytic activity">
    <reaction evidence="1">
        <text>shikimate + NADP(+) = 3-dehydroshikimate + NADPH + H(+)</text>
        <dbReference type="Rhea" id="RHEA:17737"/>
        <dbReference type="ChEBI" id="CHEBI:15378"/>
        <dbReference type="ChEBI" id="CHEBI:16630"/>
        <dbReference type="ChEBI" id="CHEBI:36208"/>
        <dbReference type="ChEBI" id="CHEBI:57783"/>
        <dbReference type="ChEBI" id="CHEBI:58349"/>
        <dbReference type="EC" id="1.1.1.25"/>
    </reaction>
</comment>
<comment type="catalytic activity">
    <reaction evidence="1">
        <text>shikimate + ATP = 3-phosphoshikimate + ADP + H(+)</text>
        <dbReference type="Rhea" id="RHEA:13121"/>
        <dbReference type="ChEBI" id="CHEBI:15378"/>
        <dbReference type="ChEBI" id="CHEBI:30616"/>
        <dbReference type="ChEBI" id="CHEBI:36208"/>
        <dbReference type="ChEBI" id="CHEBI:145989"/>
        <dbReference type="ChEBI" id="CHEBI:456216"/>
        <dbReference type="EC" id="2.7.1.71"/>
    </reaction>
</comment>
<comment type="catalytic activity">
    <reaction evidence="1">
        <text>3-phosphoshikimate + phosphoenolpyruvate = 5-O-(1-carboxyvinyl)-3-phosphoshikimate + phosphate</text>
        <dbReference type="Rhea" id="RHEA:21256"/>
        <dbReference type="ChEBI" id="CHEBI:43474"/>
        <dbReference type="ChEBI" id="CHEBI:57701"/>
        <dbReference type="ChEBI" id="CHEBI:58702"/>
        <dbReference type="ChEBI" id="CHEBI:145989"/>
        <dbReference type="EC" id="2.5.1.19"/>
    </reaction>
</comment>
<comment type="cofactor">
    <cofactor>
        <name>Zn(2+)</name>
        <dbReference type="ChEBI" id="CHEBI:29105"/>
    </cofactor>
    <text>Binds 2 Zn(2+) ions per subunit.</text>
</comment>
<comment type="pathway">
    <text evidence="1">Metabolic intermediate biosynthesis; chorismate biosynthesis; chorismate from D-erythrose 4-phosphate and phosphoenolpyruvate: step 2/7.</text>
</comment>
<comment type="pathway">
    <text evidence="1">Metabolic intermediate biosynthesis; chorismate biosynthesis; chorismate from D-erythrose 4-phosphate and phosphoenolpyruvate: step 3/7.</text>
</comment>
<comment type="pathway">
    <text evidence="1">Metabolic intermediate biosynthesis; chorismate biosynthesis; chorismate from D-erythrose 4-phosphate and phosphoenolpyruvate: step 4/7.</text>
</comment>
<comment type="pathway">
    <text evidence="1">Metabolic intermediate biosynthesis; chorismate biosynthesis; chorismate from D-erythrose 4-phosphate and phosphoenolpyruvate: step 5/7.</text>
</comment>
<comment type="pathway">
    <text evidence="1">Metabolic intermediate biosynthesis; chorismate biosynthesis; chorismate from D-erythrose 4-phosphate and phosphoenolpyruvate: step 6/7.</text>
</comment>
<comment type="subunit">
    <text evidence="1">Homodimer.</text>
</comment>
<comment type="subcellular location">
    <subcellularLocation>
        <location evidence="1">Cytoplasm</location>
    </subcellularLocation>
</comment>
<comment type="similarity">
    <text evidence="1">In the N-terminal section; belongs to the sugar phosphate cyclases superfamily. Dehydroquinate synthase family.</text>
</comment>
<comment type="similarity">
    <text evidence="1">In the 2nd section; belongs to the EPSP synthase family.</text>
</comment>
<comment type="similarity">
    <text evidence="1">In the 3rd section; belongs to the shikimate kinase family.</text>
</comment>
<comment type="similarity">
    <text evidence="1">In the 4th section; belongs to the type-I 3-dehydroquinase family.</text>
</comment>
<comment type="similarity">
    <text evidence="1">In the C-terminal section; belongs to the shikimate dehydrogenase family.</text>
</comment>